<evidence type="ECO:0000250" key="1"/>
<evidence type="ECO:0000250" key="2">
    <source>
        <dbReference type="UniProtKB" id="P80035"/>
    </source>
</evidence>
<evidence type="ECO:0000255" key="3"/>
<evidence type="ECO:0000256" key="4">
    <source>
        <dbReference type="SAM" id="MobiDB-lite"/>
    </source>
</evidence>
<evidence type="ECO:0000269" key="5">
    <source>
    </source>
</evidence>
<evidence type="ECO:0000269" key="6">
    <source>
    </source>
</evidence>
<evidence type="ECO:0000305" key="7"/>
<evidence type="ECO:0000312" key="8">
    <source>
        <dbReference type="EMBL" id="CAA20447.1"/>
    </source>
</evidence>
<sequence>MIQLPFIQRLKWEEYMALFLGFFFVIFEKLLSCLAFMIHNTLGLFYRSVVRNEIKKRSKKRSRSRSVSLQRAKAIHDAADIREMCKISGYYVEDHLVRTEDDYILCIHRISKDSPGRIGSPHPKKLPVVYCHHGLLMNSEVWVCNVDPRNCLVFDLVNKGYDVWLGNNRGNKYSRQHLRFDSTDKEFWDFSIDDFAQYDIPDTIDYILKTSGQTKLTYIGFSQGTAQAFASLSIHPLLNDKINSLIALAPAISPKGLHNRVVDAFVKARPSILFFLFGRKSILPSAGFWQSFLAPKFFDAVLAYCLSQLFNWSCQNISSYQRLVSFAHLYSYTSVKCLVHWFQIMRSAEFRMYDNDQLGHDYFLKYYKAAKFPTNNIRTPIYLIWGGSDSLVDIQAMLNALPAEVEHVKVDSYEHLDMIWADTVKDYVIPPVLRRLRDIHHPPEHEENDKENREIQKNHIAPRNKPI</sequence>
<accession>O74430</accession>
<keyword id="KW-0963">Cytoplasm</keyword>
<keyword id="KW-0325">Glycoprotein</keyword>
<keyword id="KW-0378">Hydrolase</keyword>
<keyword id="KW-0442">Lipid degradation</keyword>
<keyword id="KW-0443">Lipid metabolism</keyword>
<keyword id="KW-0472">Membrane</keyword>
<keyword id="KW-0597">Phosphoprotein</keyword>
<keyword id="KW-1185">Reference proteome</keyword>
<keyword id="KW-0735">Signal-anchor</keyword>
<keyword id="KW-0812">Transmembrane</keyword>
<keyword id="KW-1133">Transmembrane helix</keyword>
<dbReference type="EC" id="3.1.1.-"/>
<dbReference type="EMBL" id="CU329672">
    <property type="protein sequence ID" value="CAA20447.1"/>
    <property type="molecule type" value="Genomic_DNA"/>
</dbReference>
<dbReference type="PIR" id="T41053">
    <property type="entry name" value="T41053"/>
</dbReference>
<dbReference type="RefSeq" id="NP_587880.1">
    <property type="nucleotide sequence ID" value="NM_001022872.2"/>
</dbReference>
<dbReference type="SMR" id="O74430"/>
<dbReference type="BioGRID" id="275910">
    <property type="interactions" value="10"/>
</dbReference>
<dbReference type="FunCoup" id="O74430">
    <property type="interactions" value="50"/>
</dbReference>
<dbReference type="STRING" id="284812.O74430"/>
<dbReference type="ESTHER" id="schpo-SPCC1672.09">
    <property type="family name" value="Acidic_Lipase"/>
</dbReference>
<dbReference type="iPTMnet" id="O74430"/>
<dbReference type="PaxDb" id="4896-SPCC1672.09.1"/>
<dbReference type="EnsemblFungi" id="SPCC1672.09.1">
    <property type="protein sequence ID" value="SPCC1672.09.1:pep"/>
    <property type="gene ID" value="SPCC1672.09"/>
</dbReference>
<dbReference type="KEGG" id="spo:2539344"/>
<dbReference type="PomBase" id="SPCC1672.09"/>
<dbReference type="VEuPathDB" id="FungiDB:SPCC1672.09"/>
<dbReference type="eggNOG" id="KOG2624">
    <property type="taxonomic scope" value="Eukaryota"/>
</dbReference>
<dbReference type="HOGENOM" id="CLU_010974_5_0_1"/>
<dbReference type="InParanoid" id="O74430"/>
<dbReference type="OMA" id="WRMYNEI"/>
<dbReference type="PhylomeDB" id="O74430"/>
<dbReference type="Reactome" id="R-SPO-192456">
    <property type="pathway name" value="Digestion of dietary lipid"/>
</dbReference>
<dbReference type="Reactome" id="R-SPO-6809371">
    <property type="pathway name" value="Formation of the cornified envelope"/>
</dbReference>
<dbReference type="PRO" id="PR:O74430"/>
<dbReference type="Proteomes" id="UP000002485">
    <property type="component" value="Chromosome III"/>
</dbReference>
<dbReference type="GO" id="GO:0005737">
    <property type="term" value="C:cytoplasm"/>
    <property type="evidence" value="ECO:0007005"/>
    <property type="project" value="PomBase"/>
</dbReference>
<dbReference type="GO" id="GO:0016020">
    <property type="term" value="C:membrane"/>
    <property type="evidence" value="ECO:0007669"/>
    <property type="project" value="UniProtKB-SubCell"/>
</dbReference>
<dbReference type="GO" id="GO:0004771">
    <property type="term" value="F:sterol ester esterase activity"/>
    <property type="evidence" value="ECO:0000318"/>
    <property type="project" value="GO_Central"/>
</dbReference>
<dbReference type="GO" id="GO:0008204">
    <property type="term" value="P:ergosterol metabolic process"/>
    <property type="evidence" value="ECO:0000266"/>
    <property type="project" value="PomBase"/>
</dbReference>
<dbReference type="GO" id="GO:0016042">
    <property type="term" value="P:lipid catabolic process"/>
    <property type="evidence" value="ECO:0007669"/>
    <property type="project" value="UniProtKB-KW"/>
</dbReference>
<dbReference type="GO" id="GO:0016125">
    <property type="term" value="P:sterol metabolic process"/>
    <property type="evidence" value="ECO:0000318"/>
    <property type="project" value="GO_Central"/>
</dbReference>
<dbReference type="FunFam" id="3.40.50.1820:FF:000095">
    <property type="entry name" value="Triglyceride lipase-cholesterol esterase"/>
    <property type="match status" value="1"/>
</dbReference>
<dbReference type="Gene3D" id="3.40.50.1820">
    <property type="entry name" value="alpha/beta hydrolase"/>
    <property type="match status" value="1"/>
</dbReference>
<dbReference type="InterPro" id="IPR000073">
    <property type="entry name" value="AB_hydrolase_1"/>
</dbReference>
<dbReference type="InterPro" id="IPR029058">
    <property type="entry name" value="AB_hydrolase_fold"/>
</dbReference>
<dbReference type="PANTHER" id="PTHR11005">
    <property type="entry name" value="LYSOSOMAL ACID LIPASE-RELATED"/>
    <property type="match status" value="1"/>
</dbReference>
<dbReference type="Pfam" id="PF00561">
    <property type="entry name" value="Abhydrolase_1"/>
    <property type="match status" value="1"/>
</dbReference>
<dbReference type="SUPFAM" id="SSF53474">
    <property type="entry name" value="alpha/beta-Hydrolases"/>
    <property type="match status" value="1"/>
</dbReference>
<proteinExistence type="evidence at protein level"/>
<name>TGCE1_SCHPO</name>
<feature type="chain" id="PRO_0000312659" description="Probable lipase C1672.09">
    <location>
        <begin position="1"/>
        <end position="467"/>
    </location>
</feature>
<feature type="topological domain" description="Cytoplasmic" evidence="3">
    <location>
        <begin position="1"/>
        <end position="17"/>
    </location>
</feature>
<feature type="transmembrane region" description="Helical; Signal-anchor for type II membrane protein" evidence="3">
    <location>
        <begin position="18"/>
        <end position="38"/>
    </location>
</feature>
<feature type="topological domain" description="Lumenal" evidence="3">
    <location>
        <begin position="39"/>
        <end position="467"/>
    </location>
</feature>
<feature type="domain" description="AB hydrolase-1" evidence="3">
    <location>
        <begin position="127"/>
        <end position="421"/>
    </location>
</feature>
<feature type="region of interest" description="Disordered" evidence="4">
    <location>
        <begin position="440"/>
        <end position="467"/>
    </location>
</feature>
<feature type="compositionally biased region" description="Basic and acidic residues" evidence="4">
    <location>
        <begin position="440"/>
        <end position="457"/>
    </location>
</feature>
<feature type="active site" description="Nucleophile" evidence="1">
    <location>
        <position position="222"/>
    </location>
</feature>
<feature type="active site" description="Charge relay system" evidence="2">
    <location>
        <position position="389"/>
    </location>
</feature>
<feature type="active site" description="Charge relay system" evidence="2">
    <location>
        <position position="415"/>
    </location>
</feature>
<feature type="modified residue" description="Phosphoserine" evidence="6">
    <location>
        <position position="66"/>
    </location>
</feature>
<feature type="glycosylation site" description="N-linked (GlcNAc...) asparagine" evidence="3">
    <location>
        <position position="311"/>
    </location>
</feature>
<feature type="glycosylation site" description="N-linked (GlcNAc...) asparagine" evidence="3">
    <location>
        <position position="316"/>
    </location>
</feature>
<comment type="function">
    <text evidence="1">Probable lipase.</text>
</comment>
<comment type="subcellular location">
    <subcellularLocation>
        <location evidence="5">Cytoplasm</location>
    </subcellularLocation>
    <subcellularLocation>
        <location evidence="3">Membrane</location>
        <topology evidence="7">Single-pass type II membrane protein</topology>
    </subcellularLocation>
</comment>
<comment type="similarity">
    <text evidence="7">Belongs to the AB hydrolase superfamily. Lipase family.</text>
</comment>
<organism>
    <name type="scientific">Schizosaccharomyces pombe (strain 972 / ATCC 24843)</name>
    <name type="common">Fission yeast</name>
    <dbReference type="NCBI Taxonomy" id="284812"/>
    <lineage>
        <taxon>Eukaryota</taxon>
        <taxon>Fungi</taxon>
        <taxon>Dikarya</taxon>
        <taxon>Ascomycota</taxon>
        <taxon>Taphrinomycotina</taxon>
        <taxon>Schizosaccharomycetes</taxon>
        <taxon>Schizosaccharomycetales</taxon>
        <taxon>Schizosaccharomycetaceae</taxon>
        <taxon>Schizosaccharomyces</taxon>
    </lineage>
</organism>
<reference evidence="8" key="1">
    <citation type="journal article" date="2002" name="Nature">
        <title>The genome sequence of Schizosaccharomyces pombe.</title>
        <authorList>
            <person name="Wood V."/>
            <person name="Gwilliam R."/>
            <person name="Rajandream M.A."/>
            <person name="Lyne M.H."/>
            <person name="Lyne R."/>
            <person name="Stewart A."/>
            <person name="Sgouros J.G."/>
            <person name="Peat N."/>
            <person name="Hayles J."/>
            <person name="Baker S.G."/>
            <person name="Basham D."/>
            <person name="Bowman S."/>
            <person name="Brooks K."/>
            <person name="Brown D."/>
            <person name="Brown S."/>
            <person name="Chillingworth T."/>
            <person name="Churcher C.M."/>
            <person name="Collins M."/>
            <person name="Connor R."/>
            <person name="Cronin A."/>
            <person name="Davis P."/>
            <person name="Feltwell T."/>
            <person name="Fraser A."/>
            <person name="Gentles S."/>
            <person name="Goble A."/>
            <person name="Hamlin N."/>
            <person name="Harris D.E."/>
            <person name="Hidalgo J."/>
            <person name="Hodgson G."/>
            <person name="Holroyd S."/>
            <person name="Hornsby T."/>
            <person name="Howarth S."/>
            <person name="Huckle E.J."/>
            <person name="Hunt S."/>
            <person name="Jagels K."/>
            <person name="James K.D."/>
            <person name="Jones L."/>
            <person name="Jones M."/>
            <person name="Leather S."/>
            <person name="McDonald S."/>
            <person name="McLean J."/>
            <person name="Mooney P."/>
            <person name="Moule S."/>
            <person name="Mungall K.L."/>
            <person name="Murphy L.D."/>
            <person name="Niblett D."/>
            <person name="Odell C."/>
            <person name="Oliver K."/>
            <person name="O'Neil S."/>
            <person name="Pearson D."/>
            <person name="Quail M.A."/>
            <person name="Rabbinowitsch E."/>
            <person name="Rutherford K.M."/>
            <person name="Rutter S."/>
            <person name="Saunders D."/>
            <person name="Seeger K."/>
            <person name="Sharp S."/>
            <person name="Skelton J."/>
            <person name="Simmonds M.N."/>
            <person name="Squares R."/>
            <person name="Squares S."/>
            <person name="Stevens K."/>
            <person name="Taylor K."/>
            <person name="Taylor R.G."/>
            <person name="Tivey A."/>
            <person name="Walsh S.V."/>
            <person name="Warren T."/>
            <person name="Whitehead S."/>
            <person name="Woodward J.R."/>
            <person name="Volckaert G."/>
            <person name="Aert R."/>
            <person name="Robben J."/>
            <person name="Grymonprez B."/>
            <person name="Weltjens I."/>
            <person name="Vanstreels E."/>
            <person name="Rieger M."/>
            <person name="Schaefer M."/>
            <person name="Mueller-Auer S."/>
            <person name="Gabel C."/>
            <person name="Fuchs M."/>
            <person name="Duesterhoeft A."/>
            <person name="Fritzc C."/>
            <person name="Holzer E."/>
            <person name="Moestl D."/>
            <person name="Hilbert H."/>
            <person name="Borzym K."/>
            <person name="Langer I."/>
            <person name="Beck A."/>
            <person name="Lehrach H."/>
            <person name="Reinhardt R."/>
            <person name="Pohl T.M."/>
            <person name="Eger P."/>
            <person name="Zimmermann W."/>
            <person name="Wedler H."/>
            <person name="Wambutt R."/>
            <person name="Purnelle B."/>
            <person name="Goffeau A."/>
            <person name="Cadieu E."/>
            <person name="Dreano S."/>
            <person name="Gloux S."/>
            <person name="Lelaure V."/>
            <person name="Mottier S."/>
            <person name="Galibert F."/>
            <person name="Aves S.J."/>
            <person name="Xiang Z."/>
            <person name="Hunt C."/>
            <person name="Moore K."/>
            <person name="Hurst S.M."/>
            <person name="Lucas M."/>
            <person name="Rochet M."/>
            <person name="Gaillardin C."/>
            <person name="Tallada V.A."/>
            <person name="Garzon A."/>
            <person name="Thode G."/>
            <person name="Daga R.R."/>
            <person name="Cruzado L."/>
            <person name="Jimenez J."/>
            <person name="Sanchez M."/>
            <person name="del Rey F."/>
            <person name="Benito J."/>
            <person name="Dominguez A."/>
            <person name="Revuelta J.L."/>
            <person name="Moreno S."/>
            <person name="Armstrong J."/>
            <person name="Forsburg S.L."/>
            <person name="Cerutti L."/>
            <person name="Lowe T."/>
            <person name="McCombie W.R."/>
            <person name="Paulsen I."/>
            <person name="Potashkin J."/>
            <person name="Shpakovski G.V."/>
            <person name="Ussery D."/>
            <person name="Barrell B.G."/>
            <person name="Nurse P."/>
        </authorList>
    </citation>
    <scope>NUCLEOTIDE SEQUENCE [LARGE SCALE GENOMIC DNA]</scope>
    <source>
        <strain>972 / ATCC 24843</strain>
    </source>
</reference>
<reference evidence="7" key="2">
    <citation type="journal article" date="2006" name="Nat. Biotechnol.">
        <title>ORFeome cloning and global analysis of protein localization in the fission yeast Schizosaccharomyces pombe.</title>
        <authorList>
            <person name="Matsuyama A."/>
            <person name="Arai R."/>
            <person name="Yashiroda Y."/>
            <person name="Shirai A."/>
            <person name="Kamata A."/>
            <person name="Sekido S."/>
            <person name="Kobayashi Y."/>
            <person name="Hashimoto A."/>
            <person name="Hamamoto M."/>
            <person name="Hiraoka Y."/>
            <person name="Horinouchi S."/>
            <person name="Yoshida M."/>
        </authorList>
    </citation>
    <scope>SUBCELLULAR LOCATION [LARGE SCALE ANALYSIS]</scope>
</reference>
<reference key="3">
    <citation type="journal article" date="2008" name="J. Proteome Res.">
        <title>Phosphoproteome analysis of fission yeast.</title>
        <authorList>
            <person name="Wilson-Grady J.T."/>
            <person name="Villen J."/>
            <person name="Gygi S.P."/>
        </authorList>
    </citation>
    <scope>PHOSPHORYLATION [LARGE SCALE ANALYSIS] AT SER-66</scope>
    <scope>IDENTIFICATION BY MASS SPECTROMETRY</scope>
</reference>
<gene>
    <name type="ORF">SPCC1672.09</name>
</gene>
<protein>
    <recommendedName>
        <fullName>Probable lipase C1672.09</fullName>
        <ecNumber>3.1.1.-</ecNumber>
    </recommendedName>
</protein>